<gene>
    <name type="ordered locus">Avi_2471</name>
</gene>
<evidence type="ECO:0000255" key="1">
    <source>
        <dbReference type="HAMAP-Rule" id="MF_01085"/>
    </source>
</evidence>
<evidence type="ECO:0000256" key="2">
    <source>
        <dbReference type="SAM" id="MobiDB-lite"/>
    </source>
</evidence>
<feature type="chain" id="PRO_1000149856" description="UPF0283 membrane protein Avi_2471">
    <location>
        <begin position="1"/>
        <end position="365"/>
    </location>
</feature>
<feature type="transmembrane region" description="Helical" evidence="1">
    <location>
        <begin position="83"/>
        <end position="103"/>
    </location>
</feature>
<feature type="transmembrane region" description="Helical" evidence="1">
    <location>
        <begin position="117"/>
        <end position="137"/>
    </location>
</feature>
<feature type="region of interest" description="Disordered" evidence="2">
    <location>
        <begin position="1"/>
        <end position="47"/>
    </location>
</feature>
<feature type="compositionally biased region" description="Basic and acidic residues" evidence="2">
    <location>
        <begin position="1"/>
        <end position="10"/>
    </location>
</feature>
<dbReference type="EMBL" id="CP000633">
    <property type="protein sequence ID" value="ACM36764.1"/>
    <property type="molecule type" value="Genomic_DNA"/>
</dbReference>
<dbReference type="RefSeq" id="WP_015916185.1">
    <property type="nucleotide sequence ID" value="NC_011989.1"/>
</dbReference>
<dbReference type="STRING" id="311402.Avi_2471"/>
<dbReference type="KEGG" id="avi:Avi_2471"/>
<dbReference type="eggNOG" id="COG3768">
    <property type="taxonomic scope" value="Bacteria"/>
</dbReference>
<dbReference type="HOGENOM" id="CLU_057693_1_0_5"/>
<dbReference type="Proteomes" id="UP000001596">
    <property type="component" value="Chromosome 1"/>
</dbReference>
<dbReference type="GO" id="GO:0005886">
    <property type="term" value="C:plasma membrane"/>
    <property type="evidence" value="ECO:0007669"/>
    <property type="project" value="UniProtKB-SubCell"/>
</dbReference>
<dbReference type="HAMAP" id="MF_01085">
    <property type="entry name" value="UPF0283"/>
    <property type="match status" value="1"/>
</dbReference>
<dbReference type="InterPro" id="IPR021147">
    <property type="entry name" value="DUF697"/>
</dbReference>
<dbReference type="InterPro" id="IPR006507">
    <property type="entry name" value="UPF0283"/>
</dbReference>
<dbReference type="NCBIfam" id="TIGR01620">
    <property type="entry name" value="hyp_HI0043"/>
    <property type="match status" value="1"/>
</dbReference>
<dbReference type="PANTHER" id="PTHR39342">
    <property type="entry name" value="UPF0283 MEMBRANE PROTEIN YCJF"/>
    <property type="match status" value="1"/>
</dbReference>
<dbReference type="PANTHER" id="PTHR39342:SF1">
    <property type="entry name" value="UPF0283 MEMBRANE PROTEIN YCJF"/>
    <property type="match status" value="1"/>
</dbReference>
<dbReference type="Pfam" id="PF05128">
    <property type="entry name" value="DUF697"/>
    <property type="match status" value="1"/>
</dbReference>
<proteinExistence type="inferred from homology"/>
<name>Y2471_ALLAM</name>
<accession>B9JWY6</accession>
<organism>
    <name type="scientific">Allorhizobium ampelinum (strain ATCC BAA-846 / DSM 112012 / S4)</name>
    <name type="common">Agrobacterium vitis (strain S4)</name>
    <dbReference type="NCBI Taxonomy" id="311402"/>
    <lineage>
        <taxon>Bacteria</taxon>
        <taxon>Pseudomonadati</taxon>
        <taxon>Pseudomonadota</taxon>
        <taxon>Alphaproteobacteria</taxon>
        <taxon>Hyphomicrobiales</taxon>
        <taxon>Rhizobiaceae</taxon>
        <taxon>Rhizobium/Agrobacterium group</taxon>
        <taxon>Allorhizobium</taxon>
        <taxon>Allorhizobium ampelinum</taxon>
    </lineage>
</organism>
<protein>
    <recommendedName>
        <fullName evidence="1">UPF0283 membrane protein Avi_2471</fullName>
    </recommendedName>
</protein>
<comment type="subcellular location">
    <subcellularLocation>
        <location evidence="1">Cell inner membrane</location>
        <topology evidence="1">Multi-pass membrane protein</topology>
    </subcellularLocation>
</comment>
<comment type="similarity">
    <text evidence="1">Belongs to the UPF0283 family.</text>
</comment>
<keyword id="KW-0997">Cell inner membrane</keyword>
<keyword id="KW-1003">Cell membrane</keyword>
<keyword id="KW-0472">Membrane</keyword>
<keyword id="KW-1185">Reference proteome</keyword>
<keyword id="KW-0812">Transmembrane</keyword>
<keyword id="KW-1133">Transmembrane helix</keyword>
<reference key="1">
    <citation type="journal article" date="2009" name="J. Bacteriol.">
        <title>Genome sequences of three Agrobacterium biovars help elucidate the evolution of multichromosome genomes in bacteria.</title>
        <authorList>
            <person name="Slater S.C."/>
            <person name="Goldman B.S."/>
            <person name="Goodner B."/>
            <person name="Setubal J.C."/>
            <person name="Farrand S.K."/>
            <person name="Nester E.W."/>
            <person name="Burr T.J."/>
            <person name="Banta L."/>
            <person name="Dickerman A.W."/>
            <person name="Paulsen I."/>
            <person name="Otten L."/>
            <person name="Suen G."/>
            <person name="Welch R."/>
            <person name="Almeida N.F."/>
            <person name="Arnold F."/>
            <person name="Burton O.T."/>
            <person name="Du Z."/>
            <person name="Ewing A."/>
            <person name="Godsy E."/>
            <person name="Heisel S."/>
            <person name="Houmiel K.L."/>
            <person name="Jhaveri J."/>
            <person name="Lu J."/>
            <person name="Miller N.M."/>
            <person name="Norton S."/>
            <person name="Chen Q."/>
            <person name="Phoolcharoen W."/>
            <person name="Ohlin V."/>
            <person name="Ondrusek D."/>
            <person name="Pride N."/>
            <person name="Stricklin S.L."/>
            <person name="Sun J."/>
            <person name="Wheeler C."/>
            <person name="Wilson L."/>
            <person name="Zhu H."/>
            <person name="Wood D.W."/>
        </authorList>
    </citation>
    <scope>NUCLEOTIDE SEQUENCE [LARGE SCALE GENOMIC DNA]</scope>
    <source>
        <strain>ATCC BAA-846 / DSM 112012 / S4</strain>
    </source>
</reference>
<sequence>MSKAPEDQRPMPRRPAAFSLEEPSSSPARPPFAEAQEPQRRAPKSFDANVTITPDAEDPFLAGLSEDEAILPIARPAKRRFSFGKLAGAAFGALASFAIGLWIDDLIRDLFTRADWLGYTALTLLGIGLLALTVVVIRELAGIYRLNAVQAIKQRASALSLQGTASEARKLVKDVEDLTQHRAETARGRSVLKAAENDIIDAPHLIALAERELLAPLDAKARSLIINASKRVSVVTAVSPRALVDLAYVLFEVVRLVRAMAELYGGRPGSIGMLRLLRDVFAHLAVTGSIAIGDGLAQQVLGHGLASRLSARLGEGVINGLMTARIGIAAMDLCRPLEFKALRRPGIGDFMPALKPAINPDSKAL</sequence>